<sequence>MIEIIIFSFIGNESFKTLQVFKNFHGFTILRGNRLNFYFLLILLCHLKWRRKQSIPNLYVLWAIIRIQCRTCPFMKCFDQRNLNVEEQKIQIYARNLLPYICAHNQVKTLVFFHPAIPLKNAAPFILYLINHTVTYNTPDYRMHLLWKSIAESRPHYAGCLEDIIF</sequence>
<accession>P87263</accession>
<organism>
    <name type="scientific">Saccharomyces cerevisiae (strain ATCC 204508 / S288c)</name>
    <name type="common">Baker's yeast</name>
    <dbReference type="NCBI Taxonomy" id="559292"/>
    <lineage>
        <taxon>Eukaryota</taxon>
        <taxon>Fungi</taxon>
        <taxon>Dikarya</taxon>
        <taxon>Ascomycota</taxon>
        <taxon>Saccharomycotina</taxon>
        <taxon>Saccharomycetes</taxon>
        <taxon>Saccharomycetales</taxon>
        <taxon>Saccharomycetaceae</taxon>
        <taxon>Saccharomyces</taxon>
    </lineage>
</organism>
<comment type="miscellaneous">
    <text evidence="1">Partially overlaps YER067W.</text>
</comment>
<comment type="caution">
    <text evidence="2">Product of a dubious gene prediction unlikely to encode a functional protein. Because of that it is not part of the S.cerevisiae S288c complete/reference proteome set.</text>
</comment>
<dbReference type="EMBL" id="U18813">
    <property type="protein sequence ID" value="AAB64611.1"/>
    <property type="molecule type" value="Genomic_DNA"/>
</dbReference>
<dbReference type="PIR" id="S53551">
    <property type="entry name" value="S53551"/>
</dbReference>
<dbReference type="DIP" id="DIP-6284N"/>
<dbReference type="IntAct" id="P87263">
    <property type="interactions" value="12"/>
</dbReference>
<dbReference type="STRING" id="4932.YER066C-A"/>
<dbReference type="PaxDb" id="4932-YER066C-A"/>
<dbReference type="EnsemblFungi" id="YER066C-A_mRNA">
    <property type="protein sequence ID" value="YER066C-A"/>
    <property type="gene ID" value="YER066C-A"/>
</dbReference>
<dbReference type="AGR" id="SGD:S000002959"/>
<dbReference type="SGD" id="S000002959">
    <property type="gene designation" value="YER066C-A"/>
</dbReference>
<dbReference type="HOGENOM" id="CLU_1603675_0_0_1"/>
<dbReference type="ChiTaRS" id="YER066C-A">
    <property type="organism name" value="yeast"/>
</dbReference>
<name>YE066_YEAST</name>
<feature type="chain" id="PRO_0000299912" description="Putative uncharacterized protein YER066C-A">
    <location>
        <begin position="1"/>
        <end position="166"/>
    </location>
</feature>
<evidence type="ECO:0000305" key="1"/>
<evidence type="ECO:0000305" key="2">
    <source>
    </source>
</evidence>
<gene>
    <name type="ordered locus">YER066C-A</name>
</gene>
<proteinExistence type="uncertain"/>
<protein>
    <recommendedName>
        <fullName>Putative uncharacterized protein YER066C-A</fullName>
    </recommendedName>
</protein>
<reference key="1">
    <citation type="journal article" date="1997" name="Nature">
        <title>The nucleotide sequence of Saccharomyces cerevisiae chromosome V.</title>
        <authorList>
            <person name="Dietrich F.S."/>
            <person name="Mulligan J.T."/>
            <person name="Hennessy K.M."/>
            <person name="Yelton M.A."/>
            <person name="Allen E."/>
            <person name="Araujo R."/>
            <person name="Aviles E."/>
            <person name="Berno A."/>
            <person name="Brennan T."/>
            <person name="Carpenter J."/>
            <person name="Chen E."/>
            <person name="Cherry J.M."/>
            <person name="Chung E."/>
            <person name="Duncan M."/>
            <person name="Guzman E."/>
            <person name="Hartzell G."/>
            <person name="Hunicke-Smith S."/>
            <person name="Hyman R.W."/>
            <person name="Kayser A."/>
            <person name="Komp C."/>
            <person name="Lashkari D."/>
            <person name="Lew H."/>
            <person name="Lin D."/>
            <person name="Mosedale D."/>
            <person name="Nakahara K."/>
            <person name="Namath A."/>
            <person name="Norgren R."/>
            <person name="Oefner P."/>
            <person name="Oh C."/>
            <person name="Petel F.X."/>
            <person name="Roberts D."/>
            <person name="Sehl P."/>
            <person name="Schramm S."/>
            <person name="Shogren T."/>
            <person name="Smith V."/>
            <person name="Taylor P."/>
            <person name="Wei Y."/>
            <person name="Botstein D."/>
            <person name="Davis R.W."/>
        </authorList>
    </citation>
    <scope>NUCLEOTIDE SEQUENCE [LARGE SCALE GENOMIC DNA]</scope>
    <source>
        <strain>ATCC 204508 / S288c</strain>
    </source>
</reference>
<reference key="2">
    <citation type="journal article" date="2014" name="G3 (Bethesda)">
        <title>The reference genome sequence of Saccharomyces cerevisiae: Then and now.</title>
        <authorList>
            <person name="Engel S.R."/>
            <person name="Dietrich F.S."/>
            <person name="Fisk D.G."/>
            <person name="Binkley G."/>
            <person name="Balakrishnan R."/>
            <person name="Costanzo M.C."/>
            <person name="Dwight S.S."/>
            <person name="Hitz B.C."/>
            <person name="Karra K."/>
            <person name="Nash R.S."/>
            <person name="Weng S."/>
            <person name="Wong E.D."/>
            <person name="Lloyd P."/>
            <person name="Skrzypek M.S."/>
            <person name="Miyasato S.R."/>
            <person name="Simison M."/>
            <person name="Cherry J.M."/>
        </authorList>
    </citation>
    <scope>GENOME REANNOTATION</scope>
    <source>
        <strain>ATCC 204508 / S288c</strain>
    </source>
</reference>